<reference key="1">
    <citation type="journal article" date="2013" name="G3 (Bethesda)">
        <title>Comparative genomics of a plant-pathogenic fungus, Pyrenophora tritici-repentis, reveals transduplication and the impact of repeat elements on pathogenicity and population divergence.</title>
        <authorList>
            <person name="Manning V.A."/>
            <person name="Pandelova I."/>
            <person name="Dhillon B."/>
            <person name="Wilhelm L.J."/>
            <person name="Goodwin S.B."/>
            <person name="Berlin A.M."/>
            <person name="Figueroa M."/>
            <person name="Freitag M."/>
            <person name="Hane J.K."/>
            <person name="Henrissat B."/>
            <person name="Holman W.H."/>
            <person name="Kodira C.D."/>
            <person name="Martin J."/>
            <person name="Oliver R.P."/>
            <person name="Robbertse B."/>
            <person name="Schackwitz W."/>
            <person name="Schwartz D.C."/>
            <person name="Spatafora J.W."/>
            <person name="Turgeon B.G."/>
            <person name="Yandava C."/>
            <person name="Young S."/>
            <person name="Zhou S."/>
            <person name="Zeng Q."/>
            <person name="Grigoriev I.V."/>
            <person name="Ma L.-J."/>
            <person name="Ciuffetti L.M."/>
        </authorList>
    </citation>
    <scope>NUCLEOTIDE SEQUENCE [LARGE SCALE GENOMIC DNA]</scope>
    <source>
        <strain>Pt-1C-BFP</strain>
    </source>
</reference>
<dbReference type="EMBL" id="DS231628">
    <property type="protein sequence ID" value="EDU43651.1"/>
    <property type="molecule type" value="Genomic_DNA"/>
</dbReference>
<dbReference type="RefSeq" id="XP_001940932.1">
    <property type="nucleotide sequence ID" value="XM_001940897.1"/>
</dbReference>
<dbReference type="SMR" id="B2WKU1"/>
<dbReference type="STRING" id="426418.B2WKU1"/>
<dbReference type="EnsemblFungi" id="EDU43651">
    <property type="protein sequence ID" value="EDU43651"/>
    <property type="gene ID" value="PTRG_10601"/>
</dbReference>
<dbReference type="GeneID" id="6348908"/>
<dbReference type="KEGG" id="ptrr:6348908"/>
<dbReference type="eggNOG" id="ENOG502SD3I">
    <property type="taxonomic scope" value="Eukaryota"/>
</dbReference>
<dbReference type="HOGENOM" id="CLU_114601_6_1_1"/>
<dbReference type="InParanoid" id="B2WKU1"/>
<dbReference type="OMA" id="IECNDEV"/>
<dbReference type="OrthoDB" id="29798at28556"/>
<dbReference type="UniPathway" id="UPA00344"/>
<dbReference type="Proteomes" id="UP000001471">
    <property type="component" value="Unassembled WGS sequence"/>
</dbReference>
<dbReference type="GO" id="GO:1990133">
    <property type="term" value="C:molybdopterin adenylyltransferase complex"/>
    <property type="evidence" value="ECO:0007669"/>
    <property type="project" value="TreeGrafter"/>
</dbReference>
<dbReference type="GO" id="GO:1990140">
    <property type="term" value="C:molybdopterin synthase complex"/>
    <property type="evidence" value="ECO:0000250"/>
    <property type="project" value="UniProtKB"/>
</dbReference>
<dbReference type="GO" id="GO:0030366">
    <property type="term" value="F:molybdopterin synthase activity"/>
    <property type="evidence" value="ECO:0007669"/>
    <property type="project" value="UniProtKB-UniRule"/>
</dbReference>
<dbReference type="GO" id="GO:0000166">
    <property type="term" value="F:nucleotide binding"/>
    <property type="evidence" value="ECO:0007669"/>
    <property type="project" value="UniProtKB-KW"/>
</dbReference>
<dbReference type="GO" id="GO:0006777">
    <property type="term" value="P:Mo-molybdopterin cofactor biosynthetic process"/>
    <property type="evidence" value="ECO:0000250"/>
    <property type="project" value="UniProtKB"/>
</dbReference>
<dbReference type="CDD" id="cd00754">
    <property type="entry name" value="Ubl_MoaD"/>
    <property type="match status" value="1"/>
</dbReference>
<dbReference type="Gene3D" id="3.10.20.30">
    <property type="match status" value="1"/>
</dbReference>
<dbReference type="HAMAP" id="MF_03051">
    <property type="entry name" value="MOCS2A"/>
    <property type="match status" value="1"/>
</dbReference>
<dbReference type="InterPro" id="IPR012675">
    <property type="entry name" value="Beta-grasp_dom_sf"/>
</dbReference>
<dbReference type="InterPro" id="IPR044672">
    <property type="entry name" value="MOCS2A"/>
</dbReference>
<dbReference type="InterPro" id="IPR028887">
    <property type="entry name" value="MOCS2A_euk"/>
</dbReference>
<dbReference type="InterPro" id="IPR016155">
    <property type="entry name" value="Mopterin_synth/thiamin_S_b"/>
</dbReference>
<dbReference type="InterPro" id="IPR003749">
    <property type="entry name" value="ThiS/MoaD-like"/>
</dbReference>
<dbReference type="PANTHER" id="PTHR33359">
    <property type="entry name" value="MOLYBDOPTERIN SYNTHASE SULFUR CARRIER SUBUNIT"/>
    <property type="match status" value="1"/>
</dbReference>
<dbReference type="PANTHER" id="PTHR33359:SF1">
    <property type="entry name" value="MOLYBDOPTERIN SYNTHASE SULFUR CARRIER SUBUNIT"/>
    <property type="match status" value="1"/>
</dbReference>
<dbReference type="Pfam" id="PF02597">
    <property type="entry name" value="ThiS"/>
    <property type="match status" value="1"/>
</dbReference>
<dbReference type="SUPFAM" id="SSF54285">
    <property type="entry name" value="MoaD/ThiS"/>
    <property type="match status" value="1"/>
</dbReference>
<evidence type="ECO:0000255" key="1">
    <source>
        <dbReference type="HAMAP-Rule" id="MF_03051"/>
    </source>
</evidence>
<comment type="function">
    <text evidence="1">Acts as a sulfur carrier required for molybdopterin biosynthesis. Component of the molybdopterin synthase complex that catalyzes the conversion of precursor Z into molybdopterin by mediating the incorporation of 2 sulfur atoms into precursor Z to generate a dithiolene group. In the complex, serves as sulfur donor by being thiocarboxylated (-COSH) at its C-terminus by uba4. After interaction with MOCS2B, the sulfur is then transferred to precursor Z to form molybdopterin.</text>
</comment>
<comment type="pathway">
    <text evidence="1">Cofactor biosynthesis; molybdopterin biosynthesis.</text>
</comment>
<comment type="subunit">
    <text evidence="1">Heterotetramer; composed of 2 small (MOCS2A) and 2 large (MOCS2B) subunits.</text>
</comment>
<comment type="subcellular location">
    <subcellularLocation>
        <location evidence="1">Cytoplasm</location>
    </subcellularLocation>
</comment>
<comment type="PTM">
    <text evidence="1">C-terminal thiocarboxylation occurs in 2 steps, it is first acyl-adenylated (-COAMP) via the hesA/moeB/thiF part of uba4, then thiocarboxylated (-COSH) via the rhodanese domain of uba4.</text>
</comment>
<comment type="similarity">
    <text evidence="1">Belongs to the MoaD family. MOCS2A subfamily.</text>
</comment>
<feature type="chain" id="PRO_0000369324" description="Molybdopterin synthase sulfur carrier subunit">
    <location>
        <begin position="1"/>
        <end position="93"/>
    </location>
</feature>
<feature type="modified residue" description="1-thioglycine; alternate" evidence="1">
    <location>
        <position position="93"/>
    </location>
</feature>
<feature type="modified residue" description="Glycyl adenylate; alternate" evidence="1">
    <location>
        <position position="93"/>
    </location>
</feature>
<keyword id="KW-0963">Cytoplasm</keyword>
<keyword id="KW-0501">Molybdenum cofactor biosynthesis</keyword>
<keyword id="KW-0547">Nucleotide-binding</keyword>
<keyword id="KW-0597">Phosphoprotein</keyword>
<keyword id="KW-1185">Reference proteome</keyword>
<sequence length="93" mass="9919">MAPGKAPAGHFSILYFAAASTFTGKTSEHLPAPVRARHVFTMLEERYPGIGDKVLSSCAVTVNLEYVDIGEEDAEQQIEEGDEVAIIPPVSSG</sequence>
<organism>
    <name type="scientific">Pyrenophora tritici-repentis (strain Pt-1C-BFP)</name>
    <name type="common">Wheat tan spot fungus</name>
    <name type="synonym">Drechslera tritici-repentis</name>
    <dbReference type="NCBI Taxonomy" id="426418"/>
    <lineage>
        <taxon>Eukaryota</taxon>
        <taxon>Fungi</taxon>
        <taxon>Dikarya</taxon>
        <taxon>Ascomycota</taxon>
        <taxon>Pezizomycotina</taxon>
        <taxon>Dothideomycetes</taxon>
        <taxon>Pleosporomycetidae</taxon>
        <taxon>Pleosporales</taxon>
        <taxon>Pleosporineae</taxon>
        <taxon>Pleosporaceae</taxon>
        <taxon>Pyrenophora</taxon>
    </lineage>
</organism>
<gene>
    <name evidence="1" type="primary">cnxG</name>
    <name type="ORF">PTRG_10601</name>
</gene>
<accession>B2WKU1</accession>
<proteinExistence type="inferred from homology"/>
<protein>
    <recommendedName>
        <fullName evidence="1">Molybdopterin synthase sulfur carrier subunit</fullName>
    </recommendedName>
    <alternativeName>
        <fullName evidence="1">Common component for nitrate reductase and xanthine dehydrogenase protein G</fullName>
    </alternativeName>
    <alternativeName>
        <fullName evidence="1">Molybdenum cofactor synthesis protein 2 small subunit</fullName>
    </alternativeName>
    <alternativeName>
        <fullName evidence="1">Molybdenum cofactor synthesis protein 2A</fullName>
        <shortName evidence="1">MOCS2A</shortName>
    </alternativeName>
    <alternativeName>
        <fullName evidence="1">Sulfur carrier protein MOCS2A</fullName>
    </alternativeName>
</protein>
<name>MOC2A_PYRTR</name>